<reference key="1">
    <citation type="journal article" date="1988" name="Gene">
        <title>Complete sequence of a type-I microfibrillar wool keratin gene.</title>
        <authorList>
            <person name="Wilson B.W."/>
            <person name="Edwards K.J."/>
            <person name="Sleigh M.J."/>
            <person name="Byrne C.R."/>
            <person name="Ward K.A."/>
        </authorList>
    </citation>
    <scope>NUCLEOTIDE SEQUENCE [GENOMIC DNA]</scope>
    <source>
        <tissue>Wool follicle</tissue>
    </source>
</reference>
<organism>
    <name type="scientific">Ovis aries</name>
    <name type="common">Sheep</name>
    <dbReference type="NCBI Taxonomy" id="9940"/>
    <lineage>
        <taxon>Eukaryota</taxon>
        <taxon>Metazoa</taxon>
        <taxon>Chordata</taxon>
        <taxon>Craniata</taxon>
        <taxon>Vertebrata</taxon>
        <taxon>Euteleostomi</taxon>
        <taxon>Mammalia</taxon>
        <taxon>Eutheria</taxon>
        <taxon>Laurasiatheria</taxon>
        <taxon>Artiodactyla</taxon>
        <taxon>Ruminantia</taxon>
        <taxon>Pecora</taxon>
        <taxon>Bovidae</taxon>
        <taxon>Caprinae</taxon>
        <taxon>Ovis</taxon>
    </lineage>
</organism>
<feature type="chain" id="PRO_0000063707" description="Keratin, type I microfibrillar, 47.6 kDa">
    <location>
        <begin position="1"/>
        <end position="404"/>
    </location>
</feature>
<feature type="domain" description="IF rod" evidence="1">
    <location>
        <begin position="56"/>
        <end position="367"/>
    </location>
</feature>
<feature type="region of interest" description="Head">
    <location>
        <begin position="1"/>
        <end position="56"/>
    </location>
</feature>
<feature type="region of interest" description="Coil 1A">
    <location>
        <begin position="57"/>
        <end position="91"/>
    </location>
</feature>
<feature type="region of interest" description="Linker 1">
    <location>
        <begin position="92"/>
        <end position="102"/>
    </location>
</feature>
<feature type="region of interest" description="Coil 1B">
    <location>
        <begin position="103"/>
        <end position="203"/>
    </location>
</feature>
<feature type="region of interest" description="Linker 12">
    <location>
        <begin position="204"/>
        <end position="219"/>
    </location>
</feature>
<feature type="region of interest" description="Coil 2">
    <location>
        <begin position="220"/>
        <end position="363"/>
    </location>
</feature>
<feature type="region of interest" description="Tail">
    <location>
        <begin position="364"/>
        <end position="404"/>
    </location>
</feature>
<feature type="site" description="Stutter">
    <location>
        <position position="305"/>
    </location>
</feature>
<proteinExistence type="inferred from homology"/>
<keyword id="KW-0175">Coiled coil</keyword>
<keyword id="KW-0403">Intermediate filament</keyword>
<keyword id="KW-0416">Keratin</keyword>
<keyword id="KW-1185">Reference proteome</keyword>
<evidence type="ECO:0000255" key="1">
    <source>
        <dbReference type="PROSITE-ProRule" id="PRU01188"/>
    </source>
</evidence>
<accession>P25690</accession>
<protein>
    <recommendedName>
        <fullName>Keratin, type I microfibrillar, 47.6 kDa</fullName>
    </recommendedName>
    <alternativeName>
        <fullName>Low-sulfur keratin</fullName>
    </alternativeName>
</protein>
<comment type="function">
    <text>Wool microfibrillar keratin.</text>
</comment>
<comment type="miscellaneous">
    <text>There are two types of cytoskeletal and microfibrillar keratin: I (acidic; 40-55 kDa) and II (neutral to basic; 56-70 kDa).</text>
</comment>
<comment type="miscellaneous">
    <text>The low-sulfur proteins, derived from the microfibrillar fraction of wool extracts, are composed of two families, each consisting of 4 homologous subunits: the type I components (8C-1, 8C-2, 8A and 8B) and the type II components (5, 7A, 7B, and 7C).</text>
</comment>
<comment type="similarity">
    <text evidence="1">Belongs to the intermediate filament family.</text>
</comment>
<name>K1M2_SHEEP</name>
<sequence length="404" mass="46063">MSFNFCLPNLSFRSSCSSRPCVPSSCCGTTLPGACNIPASVGSCNWFCEGSFNGNEKETMQFLNDRLASYLEKVRQLERENAELERRILERSQQQEPLVCPNYQSYFRTIEELQQKILCGKSENARLVVQIDNAKLASDDFRTKYETEVSLRQLVEADLNGLRRILDELTLCKSDLEARVESLKEELICLKQNHEQEVNTLRSQLGDRLNVEVDAAPTVDLNHVLNETRAQYEALVETNRRDVEEWYIRQTEELNKQVVSSSEQLQSCQAEIIELRRTVNALEVELQAQHNLRDSLENTLTETEARYSCQLNQVQSLIVSVESQLAEIRSDLERQNQEYQVLLDVRARLECEINTYRGLLDSEDCKLPCNPCATTNTCGKPIGPCISNPCVSRTRCGPCNTFVH</sequence>
<dbReference type="EMBL" id="M23912">
    <property type="status" value="NOT_ANNOTATED_CDS"/>
    <property type="molecule type" value="Genomic_DNA"/>
</dbReference>
<dbReference type="PIR" id="JS0073">
    <property type="entry name" value="JS0073"/>
</dbReference>
<dbReference type="SMR" id="P25690"/>
<dbReference type="STRING" id="9940.ENSOARP00000017221"/>
<dbReference type="PaxDb" id="9940-ENSOARP00000017221"/>
<dbReference type="eggNOG" id="ENOG502SNBF">
    <property type="taxonomic scope" value="Eukaryota"/>
</dbReference>
<dbReference type="Proteomes" id="UP000002356">
    <property type="component" value="Unplaced"/>
</dbReference>
<dbReference type="GO" id="GO:0005882">
    <property type="term" value="C:intermediate filament"/>
    <property type="evidence" value="ECO:0007669"/>
    <property type="project" value="UniProtKB-KW"/>
</dbReference>
<dbReference type="GO" id="GO:0005198">
    <property type="term" value="F:structural molecule activity"/>
    <property type="evidence" value="ECO:0007669"/>
    <property type="project" value="InterPro"/>
</dbReference>
<dbReference type="GO" id="GO:0030855">
    <property type="term" value="P:epithelial cell differentiation"/>
    <property type="evidence" value="ECO:0007669"/>
    <property type="project" value="TreeGrafter"/>
</dbReference>
<dbReference type="GO" id="GO:0045109">
    <property type="term" value="P:intermediate filament organization"/>
    <property type="evidence" value="ECO:0007669"/>
    <property type="project" value="TreeGrafter"/>
</dbReference>
<dbReference type="FunFam" id="1.20.5.1160:FF:000002">
    <property type="entry name" value="Type I keratin 10"/>
    <property type="match status" value="1"/>
</dbReference>
<dbReference type="FunFam" id="1.20.5.170:FF:000002">
    <property type="entry name" value="Type I keratin KA11"/>
    <property type="match status" value="1"/>
</dbReference>
<dbReference type="FunFam" id="1.20.5.500:FF:000001">
    <property type="entry name" value="Type II keratin 23"/>
    <property type="match status" value="1"/>
</dbReference>
<dbReference type="Gene3D" id="1.20.5.170">
    <property type="match status" value="1"/>
</dbReference>
<dbReference type="Gene3D" id="1.20.5.500">
    <property type="entry name" value="Single helix bin"/>
    <property type="match status" value="1"/>
</dbReference>
<dbReference type="Gene3D" id="1.20.5.1160">
    <property type="entry name" value="Vasodilator-stimulated phosphoprotein"/>
    <property type="match status" value="1"/>
</dbReference>
<dbReference type="InterPro" id="IPR018039">
    <property type="entry name" value="IF_conserved"/>
</dbReference>
<dbReference type="InterPro" id="IPR039008">
    <property type="entry name" value="IF_rod_dom"/>
</dbReference>
<dbReference type="InterPro" id="IPR002957">
    <property type="entry name" value="Keratin_I"/>
</dbReference>
<dbReference type="PANTHER" id="PTHR23239">
    <property type="entry name" value="INTERMEDIATE FILAMENT"/>
    <property type="match status" value="1"/>
</dbReference>
<dbReference type="PANTHER" id="PTHR23239:SF97">
    <property type="entry name" value="KERATIN, TYPE I CUTICULAR HA1"/>
    <property type="match status" value="1"/>
</dbReference>
<dbReference type="Pfam" id="PF00038">
    <property type="entry name" value="Filament"/>
    <property type="match status" value="1"/>
</dbReference>
<dbReference type="PRINTS" id="PR01248">
    <property type="entry name" value="TYPE1KERATIN"/>
</dbReference>
<dbReference type="SMART" id="SM01391">
    <property type="entry name" value="Filament"/>
    <property type="match status" value="1"/>
</dbReference>
<dbReference type="SUPFAM" id="SSF64593">
    <property type="entry name" value="Intermediate filament protein, coiled coil region"/>
    <property type="match status" value="2"/>
</dbReference>
<dbReference type="PROSITE" id="PS00226">
    <property type="entry name" value="IF_ROD_1"/>
    <property type="match status" value="1"/>
</dbReference>
<dbReference type="PROSITE" id="PS51842">
    <property type="entry name" value="IF_ROD_2"/>
    <property type="match status" value="1"/>
</dbReference>